<dbReference type="EMBL" id="X80719">
    <property type="protein sequence ID" value="CAA56724.1"/>
    <property type="molecule type" value="mRNA"/>
</dbReference>
<dbReference type="PIR" id="S47035">
    <property type="entry name" value="S47035"/>
</dbReference>
<dbReference type="GO" id="GO:0005576">
    <property type="term" value="C:extracellular region"/>
    <property type="evidence" value="ECO:0007669"/>
    <property type="project" value="UniProtKB-SubCell"/>
</dbReference>
<dbReference type="Gene3D" id="1.10.110.10">
    <property type="entry name" value="Plant lipid-transfer and hydrophobic proteins"/>
    <property type="match status" value="1"/>
</dbReference>
<dbReference type="InterPro" id="IPR036312">
    <property type="entry name" value="Bifun_inhib/LTP/seed_sf"/>
</dbReference>
<dbReference type="InterPro" id="IPR016140">
    <property type="entry name" value="Bifunc_inhib/LTP/seed_store"/>
</dbReference>
<dbReference type="PANTHER" id="PTHR35501">
    <property type="entry name" value="PROTEIN YY1"/>
    <property type="match status" value="1"/>
</dbReference>
<dbReference type="PANTHER" id="PTHR35501:SF3">
    <property type="entry name" value="PROTEIN YY1"/>
    <property type="match status" value="1"/>
</dbReference>
<dbReference type="Pfam" id="PF00234">
    <property type="entry name" value="Tryp_alpha_amyl"/>
    <property type="match status" value="1"/>
</dbReference>
<dbReference type="SMART" id="SM00499">
    <property type="entry name" value="AAI"/>
    <property type="match status" value="1"/>
</dbReference>
<dbReference type="SUPFAM" id="SSF47699">
    <property type="entry name" value="Bifunctional inhibitor/lipid-transfer protein/seed storage 2S albumin"/>
    <property type="match status" value="1"/>
</dbReference>
<name>M7_LILHE</name>
<evidence type="ECO:0000250" key="1"/>
<evidence type="ECO:0000255" key="2"/>
<evidence type="ECO:0000305" key="3"/>
<feature type="signal peptide" evidence="2">
    <location>
        <begin position="1"/>
        <end position="25"/>
    </location>
</feature>
<feature type="chain" id="PRO_0000000234" description="Protein M7">
    <location>
        <begin position="26"/>
        <end position="89"/>
    </location>
</feature>
<feature type="disulfide bond" evidence="1">
    <location>
        <begin position="28"/>
        <end position="65"/>
    </location>
</feature>
<feature type="disulfide bond" evidence="1">
    <location>
        <begin position="38"/>
        <end position="54"/>
    </location>
</feature>
<feature type="disulfide bond" evidence="1">
    <location>
        <begin position="55"/>
        <end position="80"/>
    </location>
</feature>
<feature type="disulfide bond" evidence="1">
    <location>
        <begin position="67"/>
        <end position="87"/>
    </location>
</feature>
<gene>
    <name type="primary">M7</name>
</gene>
<comment type="subcellular location">
    <subcellularLocation>
        <location evidence="3">Secreted</location>
    </subcellularLocation>
</comment>
<comment type="tissue specificity">
    <text>Tapetum of anthers.</text>
</comment>
<comment type="similarity">
    <text evidence="3">Belongs to the A9/FIL1 family.</text>
</comment>
<sequence>MAAMKSLATAILVVLLLRRLPRGLSQNCSAAIGELMTCGPYVLPGSNGAPSEQCCSALKAVNHGCLCETINIISSLPDHCSLPAVNCAA</sequence>
<accession>Q40190</accession>
<reference key="1">
    <citation type="journal article" date="1995" name="Planta">
        <title>The characterisation of tapetum-specific cDNAs isolated from a Lilium henryi L. meiocyte subtractive cDNA library.</title>
        <authorList>
            <person name="Crossley J.S."/>
            <person name="Greenland A.J."/>
            <person name="Dickinson H.G."/>
        </authorList>
    </citation>
    <scope>NUCLEOTIDE SEQUENCE [MRNA]</scope>
    <source>
        <tissue>Meiocyte</tissue>
    </source>
</reference>
<organism>
    <name type="scientific">Lilium henryi</name>
    <name type="common">Henry's lily</name>
    <dbReference type="NCBI Taxonomy" id="4689"/>
    <lineage>
        <taxon>Eukaryota</taxon>
        <taxon>Viridiplantae</taxon>
        <taxon>Streptophyta</taxon>
        <taxon>Embryophyta</taxon>
        <taxon>Tracheophyta</taxon>
        <taxon>Spermatophyta</taxon>
        <taxon>Magnoliopsida</taxon>
        <taxon>Liliopsida</taxon>
        <taxon>Liliales</taxon>
        <taxon>Liliaceae</taxon>
        <taxon>Lilium</taxon>
    </lineage>
</organism>
<proteinExistence type="evidence at transcript level"/>
<keyword id="KW-1015">Disulfide bond</keyword>
<keyword id="KW-0964">Secreted</keyword>
<keyword id="KW-0732">Signal</keyword>
<protein>
    <recommendedName>
        <fullName>Protein M7</fullName>
    </recommendedName>
    <alternativeName>
        <fullName>LhM7</fullName>
    </alternativeName>
</protein>